<gene>
    <name evidence="1" type="primary">argB</name>
    <name type="ordered locus">YPK_4088</name>
</gene>
<accession>B1JQ60</accession>
<sequence>MMNPLVIKLGGVLLDSEEALERLFTALVTYREKHERPLVIMHGGGCLVDELMKRLALPVVKKNGLRVTPADQIDIITGALAGTANKTLLAWAVKHQINAVGLCLADGNTVTVTLLDAELGHVGKAQPGSAALVQTLLAAGYMPIISSIGITVEGQLMNVNADQAATALAATLGADLILLSDVSGILDGKGQRIAEMTAQKAEQLIAQGIITDGMVVKVNAALDAARSLGRPVDIASWRHSEQLPALFNGVPIGTRISV</sequence>
<protein>
    <recommendedName>
        <fullName evidence="1">Acetylglutamate kinase</fullName>
        <ecNumber evidence="1">2.7.2.8</ecNumber>
    </recommendedName>
    <alternativeName>
        <fullName evidence="1">N-acetyl-L-glutamate 5-phosphotransferase</fullName>
    </alternativeName>
    <alternativeName>
        <fullName evidence="1">NAG kinase</fullName>
        <shortName evidence="1">NAGK</shortName>
    </alternativeName>
</protein>
<keyword id="KW-0028">Amino-acid biosynthesis</keyword>
<keyword id="KW-0055">Arginine biosynthesis</keyword>
<keyword id="KW-0067">ATP-binding</keyword>
<keyword id="KW-0963">Cytoplasm</keyword>
<keyword id="KW-0418">Kinase</keyword>
<keyword id="KW-0547">Nucleotide-binding</keyword>
<keyword id="KW-0808">Transferase</keyword>
<evidence type="ECO:0000255" key="1">
    <source>
        <dbReference type="HAMAP-Rule" id="MF_00082"/>
    </source>
</evidence>
<organism>
    <name type="scientific">Yersinia pseudotuberculosis serotype O:3 (strain YPIII)</name>
    <dbReference type="NCBI Taxonomy" id="502800"/>
    <lineage>
        <taxon>Bacteria</taxon>
        <taxon>Pseudomonadati</taxon>
        <taxon>Pseudomonadota</taxon>
        <taxon>Gammaproteobacteria</taxon>
        <taxon>Enterobacterales</taxon>
        <taxon>Yersiniaceae</taxon>
        <taxon>Yersinia</taxon>
    </lineage>
</organism>
<comment type="function">
    <text evidence="1">Catalyzes the ATP-dependent phosphorylation of N-acetyl-L-glutamate.</text>
</comment>
<comment type="catalytic activity">
    <reaction evidence="1">
        <text>N-acetyl-L-glutamate + ATP = N-acetyl-L-glutamyl 5-phosphate + ADP</text>
        <dbReference type="Rhea" id="RHEA:14629"/>
        <dbReference type="ChEBI" id="CHEBI:30616"/>
        <dbReference type="ChEBI" id="CHEBI:44337"/>
        <dbReference type="ChEBI" id="CHEBI:57936"/>
        <dbReference type="ChEBI" id="CHEBI:456216"/>
        <dbReference type="EC" id="2.7.2.8"/>
    </reaction>
</comment>
<comment type="pathway">
    <text evidence="1">Amino-acid biosynthesis; L-arginine biosynthesis; N(2)-acetyl-L-ornithine from L-glutamate: step 2/4.</text>
</comment>
<comment type="subunit">
    <text evidence="1">Homodimer.</text>
</comment>
<comment type="subcellular location">
    <subcellularLocation>
        <location evidence="1">Cytoplasm</location>
    </subcellularLocation>
</comment>
<comment type="similarity">
    <text evidence="1">Belongs to the acetylglutamate kinase family. ArgB subfamily.</text>
</comment>
<feature type="chain" id="PRO_1000092896" description="Acetylglutamate kinase">
    <location>
        <begin position="1"/>
        <end position="258"/>
    </location>
</feature>
<feature type="binding site" evidence="1">
    <location>
        <begin position="44"/>
        <end position="45"/>
    </location>
    <ligand>
        <name>substrate</name>
    </ligand>
</feature>
<feature type="binding site" evidence="1">
    <location>
        <position position="66"/>
    </location>
    <ligand>
        <name>substrate</name>
    </ligand>
</feature>
<feature type="binding site" evidence="1">
    <location>
        <position position="158"/>
    </location>
    <ligand>
        <name>substrate</name>
    </ligand>
</feature>
<feature type="binding site" evidence="1">
    <location>
        <begin position="181"/>
        <end position="186"/>
    </location>
    <ligand>
        <name>ATP</name>
        <dbReference type="ChEBI" id="CHEBI:30616"/>
    </ligand>
</feature>
<feature type="binding site" evidence="1">
    <location>
        <begin position="209"/>
        <end position="211"/>
    </location>
    <ligand>
        <name>ATP</name>
        <dbReference type="ChEBI" id="CHEBI:30616"/>
    </ligand>
</feature>
<feature type="site" description="Transition state stabilizer" evidence="1">
    <location>
        <position position="8"/>
    </location>
</feature>
<feature type="site" description="Transition state stabilizer" evidence="1">
    <location>
        <position position="217"/>
    </location>
</feature>
<dbReference type="EC" id="2.7.2.8" evidence="1"/>
<dbReference type="EMBL" id="CP000950">
    <property type="protein sequence ID" value="ACA70347.1"/>
    <property type="molecule type" value="Genomic_DNA"/>
</dbReference>
<dbReference type="SMR" id="B1JQ60"/>
<dbReference type="KEGG" id="ypy:YPK_4088"/>
<dbReference type="UniPathway" id="UPA00068">
    <property type="reaction ID" value="UER00107"/>
</dbReference>
<dbReference type="GO" id="GO:0005737">
    <property type="term" value="C:cytoplasm"/>
    <property type="evidence" value="ECO:0007669"/>
    <property type="project" value="UniProtKB-SubCell"/>
</dbReference>
<dbReference type="GO" id="GO:0003991">
    <property type="term" value="F:acetylglutamate kinase activity"/>
    <property type="evidence" value="ECO:0007669"/>
    <property type="project" value="UniProtKB-UniRule"/>
</dbReference>
<dbReference type="GO" id="GO:0005524">
    <property type="term" value="F:ATP binding"/>
    <property type="evidence" value="ECO:0007669"/>
    <property type="project" value="UniProtKB-UniRule"/>
</dbReference>
<dbReference type="GO" id="GO:0042450">
    <property type="term" value="P:arginine biosynthetic process via ornithine"/>
    <property type="evidence" value="ECO:0007669"/>
    <property type="project" value="UniProtKB-UniRule"/>
</dbReference>
<dbReference type="GO" id="GO:0006526">
    <property type="term" value="P:L-arginine biosynthetic process"/>
    <property type="evidence" value="ECO:0007669"/>
    <property type="project" value="UniProtKB-UniPathway"/>
</dbReference>
<dbReference type="CDD" id="cd04249">
    <property type="entry name" value="AAK_NAGK-NC"/>
    <property type="match status" value="1"/>
</dbReference>
<dbReference type="FunFam" id="3.40.1160.10:FF:000008">
    <property type="entry name" value="Acetylglutamate kinase"/>
    <property type="match status" value="1"/>
</dbReference>
<dbReference type="Gene3D" id="3.40.1160.10">
    <property type="entry name" value="Acetylglutamate kinase-like"/>
    <property type="match status" value="1"/>
</dbReference>
<dbReference type="HAMAP" id="MF_00082">
    <property type="entry name" value="ArgB"/>
    <property type="match status" value="1"/>
</dbReference>
<dbReference type="InterPro" id="IPR036393">
    <property type="entry name" value="AceGlu_kinase-like_sf"/>
</dbReference>
<dbReference type="InterPro" id="IPR004662">
    <property type="entry name" value="AcgluKinase_fam"/>
</dbReference>
<dbReference type="InterPro" id="IPR037528">
    <property type="entry name" value="ArgB"/>
</dbReference>
<dbReference type="InterPro" id="IPR001048">
    <property type="entry name" value="Asp/Glu/Uridylate_kinase"/>
</dbReference>
<dbReference type="InterPro" id="IPR041731">
    <property type="entry name" value="NAGK-NC"/>
</dbReference>
<dbReference type="NCBIfam" id="TIGR00761">
    <property type="entry name" value="argB"/>
    <property type="match status" value="1"/>
</dbReference>
<dbReference type="PANTHER" id="PTHR23342">
    <property type="entry name" value="N-ACETYLGLUTAMATE SYNTHASE"/>
    <property type="match status" value="1"/>
</dbReference>
<dbReference type="PANTHER" id="PTHR23342:SF0">
    <property type="entry name" value="N-ACETYLGLUTAMATE SYNTHASE, MITOCHONDRIAL"/>
    <property type="match status" value="1"/>
</dbReference>
<dbReference type="Pfam" id="PF00696">
    <property type="entry name" value="AA_kinase"/>
    <property type="match status" value="1"/>
</dbReference>
<dbReference type="PIRSF" id="PIRSF000728">
    <property type="entry name" value="NAGK"/>
    <property type="match status" value="1"/>
</dbReference>
<dbReference type="SUPFAM" id="SSF53633">
    <property type="entry name" value="Carbamate kinase-like"/>
    <property type="match status" value="1"/>
</dbReference>
<reference key="1">
    <citation type="submission" date="2008-02" db="EMBL/GenBank/DDBJ databases">
        <title>Complete sequence of Yersinia pseudotuberculosis YPIII.</title>
        <authorList>
            <consortium name="US DOE Joint Genome Institute"/>
            <person name="Copeland A."/>
            <person name="Lucas S."/>
            <person name="Lapidus A."/>
            <person name="Glavina del Rio T."/>
            <person name="Dalin E."/>
            <person name="Tice H."/>
            <person name="Bruce D."/>
            <person name="Goodwin L."/>
            <person name="Pitluck S."/>
            <person name="Munk A.C."/>
            <person name="Brettin T."/>
            <person name="Detter J.C."/>
            <person name="Han C."/>
            <person name="Tapia R."/>
            <person name="Schmutz J."/>
            <person name="Larimer F."/>
            <person name="Land M."/>
            <person name="Hauser L."/>
            <person name="Challacombe J.F."/>
            <person name="Green L."/>
            <person name="Lindler L.E."/>
            <person name="Nikolich M.P."/>
            <person name="Richardson P."/>
        </authorList>
    </citation>
    <scope>NUCLEOTIDE SEQUENCE [LARGE SCALE GENOMIC DNA]</scope>
    <source>
        <strain>YPIII</strain>
    </source>
</reference>
<proteinExistence type="inferred from homology"/>
<name>ARGB_YERPY</name>